<protein>
    <recommendedName>
        <fullName evidence="1">3'-5' exonuclease DinG</fullName>
        <ecNumber evidence="1">3.1.-.-</ecNumber>
    </recommendedName>
</protein>
<gene>
    <name evidence="1" type="primary">dinG</name>
    <name type="ordered locus">MW1345</name>
</gene>
<comment type="function">
    <text evidence="1">3'-5' exonuclease.</text>
</comment>
<comment type="similarity">
    <text evidence="1">Belongs to the helicase family. DinG subfamily. Type 2 sub-subfamily.</text>
</comment>
<accession>Q8NWP2</accession>
<evidence type="ECO:0000255" key="1">
    <source>
        <dbReference type="HAMAP-Rule" id="MF_02206"/>
    </source>
</evidence>
<organism>
    <name type="scientific">Staphylococcus aureus (strain MW2)</name>
    <dbReference type="NCBI Taxonomy" id="196620"/>
    <lineage>
        <taxon>Bacteria</taxon>
        <taxon>Bacillati</taxon>
        <taxon>Bacillota</taxon>
        <taxon>Bacilli</taxon>
        <taxon>Bacillales</taxon>
        <taxon>Staphylococcaceae</taxon>
        <taxon>Staphylococcus</taxon>
    </lineage>
</organism>
<name>DING_STAAW</name>
<proteinExistence type="inferred from homology"/>
<dbReference type="EC" id="3.1.-.-" evidence="1"/>
<dbReference type="EMBL" id="BA000033">
    <property type="protein sequence ID" value="BAB95210.1"/>
    <property type="molecule type" value="Genomic_DNA"/>
</dbReference>
<dbReference type="RefSeq" id="WP_000525081.1">
    <property type="nucleotide sequence ID" value="NC_003923.1"/>
</dbReference>
<dbReference type="SMR" id="Q8NWP2"/>
<dbReference type="KEGG" id="sam:MW1345"/>
<dbReference type="HOGENOM" id="CLU_012117_1_1_9"/>
<dbReference type="GO" id="GO:0005829">
    <property type="term" value="C:cytosol"/>
    <property type="evidence" value="ECO:0007669"/>
    <property type="project" value="TreeGrafter"/>
</dbReference>
<dbReference type="GO" id="GO:0008408">
    <property type="term" value="F:3'-5' exonuclease activity"/>
    <property type="evidence" value="ECO:0007669"/>
    <property type="project" value="UniProtKB-UniRule"/>
</dbReference>
<dbReference type="GO" id="GO:0005524">
    <property type="term" value="F:ATP binding"/>
    <property type="evidence" value="ECO:0007669"/>
    <property type="project" value="UniProtKB-UniRule"/>
</dbReference>
<dbReference type="GO" id="GO:0003677">
    <property type="term" value="F:DNA binding"/>
    <property type="evidence" value="ECO:0007669"/>
    <property type="project" value="InterPro"/>
</dbReference>
<dbReference type="GO" id="GO:0003887">
    <property type="term" value="F:DNA-directed DNA polymerase activity"/>
    <property type="evidence" value="ECO:0007669"/>
    <property type="project" value="InterPro"/>
</dbReference>
<dbReference type="GO" id="GO:0004386">
    <property type="term" value="F:helicase activity"/>
    <property type="evidence" value="ECO:0007669"/>
    <property type="project" value="InterPro"/>
</dbReference>
<dbReference type="GO" id="GO:0016818">
    <property type="term" value="F:hydrolase activity, acting on acid anhydrides, in phosphorus-containing anhydrides"/>
    <property type="evidence" value="ECO:0007669"/>
    <property type="project" value="InterPro"/>
</dbReference>
<dbReference type="GO" id="GO:0045004">
    <property type="term" value="P:DNA replication proofreading"/>
    <property type="evidence" value="ECO:0007669"/>
    <property type="project" value="TreeGrafter"/>
</dbReference>
<dbReference type="CDD" id="cd06127">
    <property type="entry name" value="DEDDh"/>
    <property type="match status" value="1"/>
</dbReference>
<dbReference type="FunFam" id="3.30.420.10:FF:000045">
    <property type="entry name" value="3'-5' exonuclease DinG"/>
    <property type="match status" value="1"/>
</dbReference>
<dbReference type="FunFam" id="3.40.50.300:FF:001816">
    <property type="entry name" value="3'-5' exonuclease DinG"/>
    <property type="match status" value="1"/>
</dbReference>
<dbReference type="FunFam" id="3.40.50.300:FF:000437">
    <property type="entry name" value="ATP-dependent DNA helicase DinG"/>
    <property type="match status" value="1"/>
</dbReference>
<dbReference type="Gene3D" id="3.40.50.300">
    <property type="entry name" value="P-loop containing nucleotide triphosphate hydrolases"/>
    <property type="match status" value="2"/>
</dbReference>
<dbReference type="Gene3D" id="3.30.420.10">
    <property type="entry name" value="Ribonuclease H-like superfamily/Ribonuclease H"/>
    <property type="match status" value="1"/>
</dbReference>
<dbReference type="HAMAP" id="MF_02206">
    <property type="entry name" value="DinG_exonucl"/>
    <property type="match status" value="1"/>
</dbReference>
<dbReference type="InterPro" id="IPR006555">
    <property type="entry name" value="ATP-dep_Helicase_C"/>
</dbReference>
<dbReference type="InterPro" id="IPR006310">
    <property type="entry name" value="DinG"/>
</dbReference>
<dbReference type="InterPro" id="IPR006054">
    <property type="entry name" value="DnaQ"/>
</dbReference>
<dbReference type="InterPro" id="IPR013520">
    <property type="entry name" value="Exonuclease_RNaseT/DNA_pol3"/>
</dbReference>
<dbReference type="InterPro" id="IPR014013">
    <property type="entry name" value="Helic_SF1/SF2_ATP-bd_DinG/Rad3"/>
</dbReference>
<dbReference type="InterPro" id="IPR027417">
    <property type="entry name" value="P-loop_NTPase"/>
</dbReference>
<dbReference type="InterPro" id="IPR012337">
    <property type="entry name" value="RNaseH-like_sf"/>
</dbReference>
<dbReference type="InterPro" id="IPR036397">
    <property type="entry name" value="RNaseH_sf"/>
</dbReference>
<dbReference type="NCBIfam" id="TIGR01407">
    <property type="entry name" value="dinG_rel"/>
    <property type="match status" value="1"/>
</dbReference>
<dbReference type="NCBIfam" id="TIGR00573">
    <property type="entry name" value="dnaq"/>
    <property type="match status" value="1"/>
</dbReference>
<dbReference type="PANTHER" id="PTHR30231">
    <property type="entry name" value="DNA POLYMERASE III SUBUNIT EPSILON"/>
    <property type="match status" value="1"/>
</dbReference>
<dbReference type="PANTHER" id="PTHR30231:SF41">
    <property type="entry name" value="DNA POLYMERASE III SUBUNIT EPSILON"/>
    <property type="match status" value="1"/>
</dbReference>
<dbReference type="Pfam" id="PF13307">
    <property type="entry name" value="Helicase_C_2"/>
    <property type="match status" value="1"/>
</dbReference>
<dbReference type="Pfam" id="PF00929">
    <property type="entry name" value="RNase_T"/>
    <property type="match status" value="1"/>
</dbReference>
<dbReference type="SMART" id="SM00479">
    <property type="entry name" value="EXOIII"/>
    <property type="match status" value="1"/>
</dbReference>
<dbReference type="SMART" id="SM00491">
    <property type="entry name" value="HELICc2"/>
    <property type="match status" value="1"/>
</dbReference>
<dbReference type="SUPFAM" id="SSF52540">
    <property type="entry name" value="P-loop containing nucleoside triphosphate hydrolases"/>
    <property type="match status" value="1"/>
</dbReference>
<dbReference type="SUPFAM" id="SSF53098">
    <property type="entry name" value="Ribonuclease H-like"/>
    <property type="match status" value="1"/>
</dbReference>
<dbReference type="PROSITE" id="PS51193">
    <property type="entry name" value="HELICASE_ATP_BIND_2"/>
    <property type="match status" value="1"/>
</dbReference>
<dbReference type="PROSITE" id="PS51194">
    <property type="entry name" value="HELICASE_CTER"/>
    <property type="match status" value="1"/>
</dbReference>
<keyword id="KW-0067">ATP-binding</keyword>
<keyword id="KW-0269">Exonuclease</keyword>
<keyword id="KW-0378">Hydrolase</keyword>
<keyword id="KW-0540">Nuclease</keyword>
<keyword id="KW-0547">Nucleotide-binding</keyword>
<sequence length="897" mass="104191">MGMATYAVVDLETTGNQLDFDDIIQIGITFVRNNQIIDTYHSMIRTNLEIPPFIQALTSIEENMLQQAPYFNQVAQEIYDKIKDCIFVAHNVDFDLNFIKKAFKDCNIQYRPKKVIDTLEIFKIAFPTDKSYQLSELAEAHGITLANAHRADEDAATTAKLMILAFEKFEKLPLDTLKQLYYLSKQLKYDLYDIFFEMVRQYDAKPLDKSYEKFEQIIYRKQVDFKKPTTNYNGSLKSLYSKAVDQLGLTYRPQQLYLAETILDQLMHSEKAMIEASLGSGKSLAYLLAALMYNIETGKHVMISTNTKLLQSQLLEKDIPAMNEALNFKINALLIKSKSDYISLGLISQILKDDTSNYEVNILKMQLLIWITETPSGDIQELNLKGGQKMYFDQKIETYVPARHDVHYYNFIKRNAQNIQIGITNHAHLIHSDVENSIYQLFDDCIVDEAHRLPDYALNQVTNELSYADIKYQLGLIGKNENEKLLKAIDQLEKQRILEKLDIAPIDIFGLKASMNEIHELNEQLFSTIFTIINDSDVYDDDIHRFHNVFTFETKDILKDLHAIIDKLNKTLEIFNGISHKTVKSLRKQLLYLKDKFKNIEQSLKAGHTSFISIKNLSQKSTIRLYVKDYAVKDVLTKQVLEKFKSLIFISGTLKFNHSFEAFKQLFNKDVHFNTFEVNTSLQSAKNTSVFIPSDVASYQYKNIDEYVASIVSYIIEYTTITSSKCLVLFTSYKMMHMVQDMLNELPEFEDYVVLTQQQNQNYKIVQQFNNFDKAILLGTSTFFEGFDFQANGIKCVMIAKLPFMNKHNAKYWLMDSEFTSTFKEYVLPDAVTRFRQGLGRLIRSENDRGIIVSFDDRLINSNYKNFFEQTLENYRQKKGDIQQFGKLLRQIQKKKK</sequence>
<feature type="chain" id="PRO_0000277597" description="3'-5' exonuclease DinG">
    <location>
        <begin position="1"/>
        <end position="897"/>
    </location>
</feature>
<feature type="domain" description="Exonuclease" evidence="1">
    <location>
        <begin position="8"/>
        <end position="161"/>
    </location>
</feature>
<feature type="domain" description="Helicase ATP-binding" evidence="1">
    <location>
        <begin position="241"/>
        <end position="496"/>
    </location>
</feature>
<feature type="domain" description="Helicase C-terminal" evidence="1">
    <location>
        <begin position="703"/>
        <end position="893"/>
    </location>
</feature>
<feature type="short sequence motif" description="DEAH box" evidence="1">
    <location>
        <begin position="448"/>
        <end position="451"/>
    </location>
</feature>
<feature type="binding site" evidence="1">
    <location>
        <begin position="276"/>
        <end position="283"/>
    </location>
    <ligand>
        <name>ATP</name>
        <dbReference type="ChEBI" id="CHEBI:30616"/>
    </ligand>
</feature>
<reference key="1">
    <citation type="journal article" date="2002" name="Lancet">
        <title>Genome and virulence determinants of high virulence community-acquired MRSA.</title>
        <authorList>
            <person name="Baba T."/>
            <person name="Takeuchi F."/>
            <person name="Kuroda M."/>
            <person name="Yuzawa H."/>
            <person name="Aoki K."/>
            <person name="Oguchi A."/>
            <person name="Nagai Y."/>
            <person name="Iwama N."/>
            <person name="Asano K."/>
            <person name="Naimi T."/>
            <person name="Kuroda H."/>
            <person name="Cui L."/>
            <person name="Yamamoto K."/>
            <person name="Hiramatsu K."/>
        </authorList>
    </citation>
    <scope>NUCLEOTIDE SEQUENCE [LARGE SCALE GENOMIC DNA]</scope>
    <source>
        <strain>MW2</strain>
    </source>
</reference>